<name>TRPB_XANOM</name>
<sequence length="405" mass="43122">MSAQPISDFYAYPDAAGHFGKFGGRFVAETLIGPLQELSAAYDQARQDPSFIAEYDKDLKHYVGRPSPIYHAERLSREVGGAQILLKREDLNHTGAHKINNTIGQALLASRMGKTRIIAETGAGQHGVASATVAARLGLECLVYMGATDIERQKINVYRMKLLGATVIPVTSGSATLKDALNEAMRDWVTNVRDTFYIIGTVAGPDPYPRMVRDFNAIVGRESRAQMLEDYGRLPDAISACVGGGSNAIGLFHAFLNDPGVKIYGAEAAGDGIATGRHAASIAAGRPGVLHGNRTYVICDDDGQITETHSISAGLDYPGVGPEHAFLSDSGRAVYQGITDDEAMAAFHLLAHTEGILAALESSHAVAQSIKLARELPKDALVLCNLSGRGDKDVHTIAAREGLAL</sequence>
<comment type="function">
    <text evidence="1">The beta subunit is responsible for the synthesis of L-tryptophan from indole and L-serine.</text>
</comment>
<comment type="catalytic activity">
    <reaction evidence="1">
        <text>(1S,2R)-1-C-(indol-3-yl)glycerol 3-phosphate + L-serine = D-glyceraldehyde 3-phosphate + L-tryptophan + H2O</text>
        <dbReference type="Rhea" id="RHEA:10532"/>
        <dbReference type="ChEBI" id="CHEBI:15377"/>
        <dbReference type="ChEBI" id="CHEBI:33384"/>
        <dbReference type="ChEBI" id="CHEBI:57912"/>
        <dbReference type="ChEBI" id="CHEBI:58866"/>
        <dbReference type="ChEBI" id="CHEBI:59776"/>
        <dbReference type="EC" id="4.2.1.20"/>
    </reaction>
</comment>
<comment type="cofactor">
    <cofactor evidence="1">
        <name>pyridoxal 5'-phosphate</name>
        <dbReference type="ChEBI" id="CHEBI:597326"/>
    </cofactor>
</comment>
<comment type="pathway">
    <text evidence="1">Amino-acid biosynthesis; L-tryptophan biosynthesis; L-tryptophan from chorismate: step 5/5.</text>
</comment>
<comment type="subunit">
    <text evidence="1">Tetramer of two alpha and two beta chains.</text>
</comment>
<comment type="similarity">
    <text evidence="1">Belongs to the TrpB family.</text>
</comment>
<keyword id="KW-0028">Amino-acid biosynthesis</keyword>
<keyword id="KW-0057">Aromatic amino acid biosynthesis</keyword>
<keyword id="KW-0456">Lyase</keyword>
<keyword id="KW-0663">Pyridoxal phosphate</keyword>
<keyword id="KW-0822">Tryptophan biosynthesis</keyword>
<accession>Q2P0U2</accession>
<reference key="1">
    <citation type="journal article" date="2005" name="Jpn. Agric. Res. Q.">
        <title>Genome sequence of Xanthomonas oryzae pv. oryzae suggests contribution of large numbers of effector genes and insertion sequences to its race diversity.</title>
        <authorList>
            <person name="Ochiai H."/>
            <person name="Inoue Y."/>
            <person name="Takeya M."/>
            <person name="Sasaki A."/>
            <person name="Kaku H."/>
        </authorList>
    </citation>
    <scope>NUCLEOTIDE SEQUENCE [LARGE SCALE GENOMIC DNA]</scope>
    <source>
        <strain>MAFF 311018</strain>
    </source>
</reference>
<gene>
    <name evidence="1" type="primary">trpB</name>
    <name type="ordered locus">XOO3080</name>
</gene>
<feature type="chain" id="PRO_1000018423" description="Tryptophan synthase beta chain">
    <location>
        <begin position="1"/>
        <end position="405"/>
    </location>
</feature>
<feature type="modified residue" description="N6-(pyridoxal phosphate)lysine" evidence="1">
    <location>
        <position position="98"/>
    </location>
</feature>
<protein>
    <recommendedName>
        <fullName evidence="1">Tryptophan synthase beta chain</fullName>
        <ecNumber evidence="1">4.2.1.20</ecNumber>
    </recommendedName>
</protein>
<organism>
    <name type="scientific">Xanthomonas oryzae pv. oryzae (strain MAFF 311018)</name>
    <dbReference type="NCBI Taxonomy" id="342109"/>
    <lineage>
        <taxon>Bacteria</taxon>
        <taxon>Pseudomonadati</taxon>
        <taxon>Pseudomonadota</taxon>
        <taxon>Gammaproteobacteria</taxon>
        <taxon>Lysobacterales</taxon>
        <taxon>Lysobacteraceae</taxon>
        <taxon>Xanthomonas</taxon>
    </lineage>
</organism>
<dbReference type="EC" id="4.2.1.20" evidence="1"/>
<dbReference type="EMBL" id="AP008229">
    <property type="protein sequence ID" value="BAE69835.1"/>
    <property type="molecule type" value="Genomic_DNA"/>
</dbReference>
<dbReference type="RefSeq" id="WP_011259762.1">
    <property type="nucleotide sequence ID" value="NC_007705.1"/>
</dbReference>
<dbReference type="SMR" id="Q2P0U2"/>
<dbReference type="KEGG" id="xom:XOO3080"/>
<dbReference type="PATRIC" id="fig|291331.8.peg.3601"/>
<dbReference type="HOGENOM" id="CLU_016734_3_1_6"/>
<dbReference type="UniPathway" id="UPA00035">
    <property type="reaction ID" value="UER00044"/>
</dbReference>
<dbReference type="GO" id="GO:0005737">
    <property type="term" value="C:cytoplasm"/>
    <property type="evidence" value="ECO:0007669"/>
    <property type="project" value="TreeGrafter"/>
</dbReference>
<dbReference type="GO" id="GO:0004834">
    <property type="term" value="F:tryptophan synthase activity"/>
    <property type="evidence" value="ECO:0007669"/>
    <property type="project" value="UniProtKB-UniRule"/>
</dbReference>
<dbReference type="CDD" id="cd06446">
    <property type="entry name" value="Trp-synth_B"/>
    <property type="match status" value="1"/>
</dbReference>
<dbReference type="FunFam" id="3.40.50.1100:FF:000001">
    <property type="entry name" value="Tryptophan synthase beta chain"/>
    <property type="match status" value="1"/>
</dbReference>
<dbReference type="FunFam" id="3.40.50.1100:FF:000004">
    <property type="entry name" value="Tryptophan synthase beta chain"/>
    <property type="match status" value="1"/>
</dbReference>
<dbReference type="Gene3D" id="3.40.50.1100">
    <property type="match status" value="2"/>
</dbReference>
<dbReference type="HAMAP" id="MF_00133">
    <property type="entry name" value="Trp_synth_beta"/>
    <property type="match status" value="1"/>
</dbReference>
<dbReference type="InterPro" id="IPR006653">
    <property type="entry name" value="Trp_synth_b_CS"/>
</dbReference>
<dbReference type="InterPro" id="IPR006654">
    <property type="entry name" value="Trp_synth_beta"/>
</dbReference>
<dbReference type="InterPro" id="IPR023026">
    <property type="entry name" value="Trp_synth_beta/beta-like"/>
</dbReference>
<dbReference type="InterPro" id="IPR001926">
    <property type="entry name" value="TrpB-like_PALP"/>
</dbReference>
<dbReference type="InterPro" id="IPR036052">
    <property type="entry name" value="TrpB-like_PALP_sf"/>
</dbReference>
<dbReference type="NCBIfam" id="TIGR00263">
    <property type="entry name" value="trpB"/>
    <property type="match status" value="1"/>
</dbReference>
<dbReference type="PANTHER" id="PTHR48077:SF3">
    <property type="entry name" value="TRYPTOPHAN SYNTHASE"/>
    <property type="match status" value="1"/>
</dbReference>
<dbReference type="PANTHER" id="PTHR48077">
    <property type="entry name" value="TRYPTOPHAN SYNTHASE-RELATED"/>
    <property type="match status" value="1"/>
</dbReference>
<dbReference type="Pfam" id="PF00291">
    <property type="entry name" value="PALP"/>
    <property type="match status" value="1"/>
</dbReference>
<dbReference type="PIRSF" id="PIRSF001413">
    <property type="entry name" value="Trp_syn_beta"/>
    <property type="match status" value="1"/>
</dbReference>
<dbReference type="SUPFAM" id="SSF53686">
    <property type="entry name" value="Tryptophan synthase beta subunit-like PLP-dependent enzymes"/>
    <property type="match status" value="1"/>
</dbReference>
<dbReference type="PROSITE" id="PS00168">
    <property type="entry name" value="TRP_SYNTHASE_BETA"/>
    <property type="match status" value="1"/>
</dbReference>
<evidence type="ECO:0000255" key="1">
    <source>
        <dbReference type="HAMAP-Rule" id="MF_00133"/>
    </source>
</evidence>
<proteinExistence type="inferred from homology"/>